<feature type="signal peptide" evidence="4">
    <location>
        <begin position="1"/>
        <end position="30"/>
    </location>
</feature>
<feature type="peptide" id="PRO_0000450738" description="Conopressin-R" evidence="1">
    <location>
        <begin position="31"/>
        <end position="39"/>
    </location>
</feature>
<feature type="propeptide" id="PRO_0000450739" evidence="3">
    <location>
        <begin position="40"/>
        <end position="47"/>
    </location>
</feature>
<feature type="chain" id="PRO_5021467512" description="Conophysin">
    <location>
        <begin position="48"/>
        <end position="160"/>
    </location>
</feature>
<feature type="modified residue" description="Glycine amide" evidence="1">
    <location>
        <position position="39"/>
    </location>
</feature>
<feature type="disulfide bond" evidence="3">
    <location>
        <begin position="31"/>
        <end position="36"/>
    </location>
</feature>
<feature type="disulfide bond" evidence="2">
    <location>
        <begin position="53"/>
        <end position="97"/>
    </location>
</feature>
<feature type="disulfide bond" evidence="2">
    <location>
        <begin position="56"/>
        <end position="70"/>
    </location>
</feature>
<feature type="disulfide bond" evidence="2">
    <location>
        <begin position="64"/>
        <end position="87"/>
    </location>
</feature>
<feature type="disulfide bond" evidence="2">
    <location>
        <begin position="71"/>
        <end position="77"/>
    </location>
</feature>
<feature type="disulfide bond" evidence="2">
    <location>
        <begin position="104"/>
        <end position="118"/>
    </location>
</feature>
<feature type="disulfide bond" evidence="2">
    <location>
        <begin position="112"/>
        <end position="130"/>
    </location>
</feature>
<feature type="disulfide bond" evidence="2">
    <location>
        <begin position="119"/>
        <end position="124"/>
    </location>
</feature>
<feature type="non-terminal residue" evidence="8">
    <location>
        <position position="160"/>
    </location>
</feature>
<reference key="1">
    <citation type="journal article" date="2020" name="Biochim. Biophys. Acta">
        <title>Cone snail analogs of the pituitary hormones oxytocin/vasopressin and their carrier protein neurophysin. Proteomic and transcriptomic identification of conopressins and conophysins.</title>
        <authorList>
            <person name="Kumar S."/>
            <person name="Vijayasarathy M."/>
            <person name="Venkatesha M.A."/>
            <person name="Sunita P."/>
            <person name="Balaram P."/>
        </authorList>
    </citation>
    <scope>NUCLEOTIDE SEQUENCE [MRNA]</scope>
    <scope>NOMENCLATURE</scope>
    <source>
        <tissue>Venom duct</tissue>
    </source>
</reference>
<evidence type="ECO:0000250" key="1">
    <source>
        <dbReference type="UniProtKB" id="A0A291NVT7"/>
    </source>
</evidence>
<evidence type="ECO:0000250" key="2">
    <source>
        <dbReference type="UniProtKB" id="P01175"/>
    </source>
</evidence>
<evidence type="ECO:0000250" key="3">
    <source>
        <dbReference type="UniProtKB" id="P05486"/>
    </source>
</evidence>
<evidence type="ECO:0000255" key="4"/>
<evidence type="ECO:0000303" key="5">
    <source>
    </source>
</evidence>
<evidence type="ECO:0000305" key="6"/>
<evidence type="ECO:0000305" key="7">
    <source>
    </source>
</evidence>
<evidence type="ECO:0000312" key="8">
    <source>
        <dbReference type="EMBL" id="QDE14047.1"/>
    </source>
</evidence>
<keyword id="KW-0027">Amidation</keyword>
<keyword id="KW-1015">Disulfide bond</keyword>
<keyword id="KW-1213">G-protein coupled receptor impairing toxin</keyword>
<keyword id="KW-0964">Secreted</keyword>
<keyword id="KW-0732">Signal</keyword>
<keyword id="KW-0800">Toxin</keyword>
<protein>
    <recommendedName>
        <fullName evidence="5">Conopressin/conophysin, isoform 2</fullName>
    </recommendedName>
    <component>
        <recommendedName>
            <fullName evidence="5">Conopressin-R</fullName>
        </recommendedName>
    </component>
    <component>
        <recommendedName>
            <fullName evidence="5">Conophysin</fullName>
        </recommendedName>
    </component>
</protein>
<proteinExistence type="evidence at transcript level"/>
<sequence length="160" mass="17194">MKCSVLQMSRLSWAMCLMLLMLLLLGTAQGCFIRNCPRGGKRAVDALQPTRQCMSCGPDGVGQCVGPSVCCGLGLGCLMGTPETEVCQKENESSVPCAISGRHCGMDNTGNCVADGICCVEDACSFNSLCRVDTDQEDSVSARQELLTLIRRLLVNRQYD</sequence>
<dbReference type="EMBL" id="MK263339">
    <property type="protein sequence ID" value="QDE14047.1"/>
    <property type="molecule type" value="mRNA"/>
</dbReference>
<dbReference type="SMR" id="A0A4Y5X186"/>
<dbReference type="GO" id="GO:0005615">
    <property type="term" value="C:extracellular space"/>
    <property type="evidence" value="ECO:0007669"/>
    <property type="project" value="TreeGrafter"/>
</dbReference>
<dbReference type="GO" id="GO:0030141">
    <property type="term" value="C:secretory granule"/>
    <property type="evidence" value="ECO:0007669"/>
    <property type="project" value="TreeGrafter"/>
</dbReference>
<dbReference type="GO" id="GO:0005185">
    <property type="term" value="F:neurohypophyseal hormone activity"/>
    <property type="evidence" value="ECO:0007669"/>
    <property type="project" value="InterPro"/>
</dbReference>
<dbReference type="GO" id="GO:0090729">
    <property type="term" value="F:toxin activity"/>
    <property type="evidence" value="ECO:0007669"/>
    <property type="project" value="UniProtKB-KW"/>
</dbReference>
<dbReference type="Gene3D" id="2.60.9.10">
    <property type="entry name" value="Neurohypophysial hormone domain"/>
    <property type="match status" value="1"/>
</dbReference>
<dbReference type="InterPro" id="IPR000981">
    <property type="entry name" value="Neurhyp_horm"/>
</dbReference>
<dbReference type="InterPro" id="IPR036387">
    <property type="entry name" value="Neurhyp_horm_dom_sf"/>
</dbReference>
<dbReference type="InterPro" id="IPR022423">
    <property type="entry name" value="Neurohypophysial_hormone_CS"/>
</dbReference>
<dbReference type="PANTHER" id="PTHR11681:SF5">
    <property type="entry name" value="ISOTOCIN"/>
    <property type="match status" value="1"/>
</dbReference>
<dbReference type="PANTHER" id="PTHR11681">
    <property type="entry name" value="NEUROPHYSIN"/>
    <property type="match status" value="1"/>
</dbReference>
<dbReference type="Pfam" id="PF00184">
    <property type="entry name" value="Hormone_5"/>
    <property type="match status" value="1"/>
</dbReference>
<dbReference type="PIRSF" id="PIRSF001815">
    <property type="entry name" value="Nonapeptide_hormone_precursor"/>
    <property type="match status" value="1"/>
</dbReference>
<dbReference type="PRINTS" id="PR00831">
    <property type="entry name" value="NEUROPHYSIN"/>
</dbReference>
<dbReference type="SMART" id="SM00003">
    <property type="entry name" value="NH"/>
    <property type="match status" value="1"/>
</dbReference>
<dbReference type="SUPFAM" id="SSF49606">
    <property type="entry name" value="Neurophysin II"/>
    <property type="match status" value="1"/>
</dbReference>
<dbReference type="PROSITE" id="PS00264">
    <property type="entry name" value="NEUROHYPOPHYS_HORM"/>
    <property type="match status" value="1"/>
</dbReference>
<accession>A0A4Y5X186</accession>
<comment type="function">
    <text evidence="3">Targets vasopressin-oxytocin related receptors.</text>
</comment>
<comment type="subcellular location">
    <subcellularLocation>
        <location evidence="7">Secreted</location>
    </subcellularLocation>
</comment>
<comment type="tissue specificity">
    <text evidence="7">Expressed by the venom gland.</text>
</comment>
<comment type="domain">
    <text evidence="6">The cysteine framework of the conopressin is C-C.</text>
</comment>
<comment type="miscellaneous">
    <text evidence="7">The letter 'R' in the name 'Conopressin-R' proposed by Kumar and colleagues stands for the eighth residue, which differs between conopressins.</text>
</comment>
<comment type="similarity">
    <text evidence="6">Belongs to the vasopressin/oxytocin family.</text>
</comment>
<name>CESS2_CONMO</name>
<organism>
    <name type="scientific">Conus monile</name>
    <name type="common">Necklace cone</name>
    <dbReference type="NCBI Taxonomy" id="351660"/>
    <lineage>
        <taxon>Eukaryota</taxon>
        <taxon>Metazoa</taxon>
        <taxon>Spiralia</taxon>
        <taxon>Lophotrochozoa</taxon>
        <taxon>Mollusca</taxon>
        <taxon>Gastropoda</taxon>
        <taxon>Caenogastropoda</taxon>
        <taxon>Neogastropoda</taxon>
        <taxon>Conoidea</taxon>
        <taxon>Conidae</taxon>
        <taxon>Conus</taxon>
        <taxon>Strategoconus</taxon>
    </lineage>
</organism>